<gene>
    <name type="primary">sodC</name>
    <name type="ordered locus">BRA0703</name>
    <name type="ordered locus">BS1330_II0696</name>
</gene>
<keyword id="KW-0049">Antioxidant</keyword>
<keyword id="KW-0186">Copper</keyword>
<keyword id="KW-1015">Disulfide bond</keyword>
<keyword id="KW-0479">Metal-binding</keyword>
<keyword id="KW-0560">Oxidoreductase</keyword>
<keyword id="KW-0574">Periplasm</keyword>
<keyword id="KW-0732">Signal</keyword>
<keyword id="KW-0862">Zinc</keyword>
<evidence type="ECO:0000250" key="1"/>
<evidence type="ECO:0000255" key="2"/>
<evidence type="ECO:0000305" key="3"/>
<reference key="1">
    <citation type="journal article" date="2002" name="Proc. Natl. Acad. Sci. U.S.A.">
        <title>The Brucella suis genome reveals fundamental similarities between animal and plant pathogens and symbionts.</title>
        <authorList>
            <person name="Paulsen I.T."/>
            <person name="Seshadri R."/>
            <person name="Nelson K.E."/>
            <person name="Eisen J.A."/>
            <person name="Heidelberg J.F."/>
            <person name="Read T.D."/>
            <person name="Dodson R.J."/>
            <person name="Umayam L.A."/>
            <person name="Brinkac L.M."/>
            <person name="Beanan M.J."/>
            <person name="Daugherty S.C."/>
            <person name="DeBoy R.T."/>
            <person name="Durkin A.S."/>
            <person name="Kolonay J.F."/>
            <person name="Madupu R."/>
            <person name="Nelson W.C."/>
            <person name="Ayodeji B."/>
            <person name="Kraul M."/>
            <person name="Shetty J."/>
            <person name="Malek J.A."/>
            <person name="Van Aken S.E."/>
            <person name="Riedmuller S."/>
            <person name="Tettelin H."/>
            <person name="Gill S.R."/>
            <person name="White O."/>
            <person name="Salzberg S.L."/>
            <person name="Hoover D.L."/>
            <person name="Lindler L.E."/>
            <person name="Halling S.M."/>
            <person name="Boyle S.M."/>
            <person name="Fraser C.M."/>
        </authorList>
    </citation>
    <scope>NUCLEOTIDE SEQUENCE [LARGE SCALE GENOMIC DNA]</scope>
    <source>
        <strain>1330</strain>
    </source>
</reference>
<reference key="2">
    <citation type="journal article" date="2011" name="J. Bacteriol.">
        <title>Revised genome sequence of Brucella suis 1330.</title>
        <authorList>
            <person name="Tae H."/>
            <person name="Shallom S."/>
            <person name="Settlage R."/>
            <person name="Preston D."/>
            <person name="Adams L.G."/>
            <person name="Garner H.R."/>
        </authorList>
    </citation>
    <scope>NUCLEOTIDE SEQUENCE [LARGE SCALE GENOMIC DNA]</scope>
    <source>
        <strain>1330</strain>
    </source>
</reference>
<name>SODC_BRUSU</name>
<proteinExistence type="inferred from homology"/>
<dbReference type="EC" id="1.15.1.1"/>
<dbReference type="EMBL" id="AE014292">
    <property type="protein sequence ID" value="AAN33888.1"/>
    <property type="status" value="ALT_INIT"/>
    <property type="molecule type" value="Genomic_DNA"/>
</dbReference>
<dbReference type="EMBL" id="CP002998">
    <property type="protein sequence ID" value="AEM20163.1"/>
    <property type="status" value="ALT_INIT"/>
    <property type="molecule type" value="Genomic_DNA"/>
</dbReference>
<dbReference type="SMR" id="P66827"/>
<dbReference type="KEGG" id="bms:BRA0703"/>
<dbReference type="KEGG" id="bsi:BS1330_II0696"/>
<dbReference type="HOGENOM" id="CLU_056632_7_1_5"/>
<dbReference type="PRO" id="PR:P66827"/>
<dbReference type="Proteomes" id="UP000007104">
    <property type="component" value="Chromosome II"/>
</dbReference>
<dbReference type="GO" id="GO:0042597">
    <property type="term" value="C:periplasmic space"/>
    <property type="evidence" value="ECO:0007669"/>
    <property type="project" value="UniProtKB-SubCell"/>
</dbReference>
<dbReference type="GO" id="GO:0005507">
    <property type="term" value="F:copper ion binding"/>
    <property type="evidence" value="ECO:0007669"/>
    <property type="project" value="InterPro"/>
</dbReference>
<dbReference type="GO" id="GO:0004784">
    <property type="term" value="F:superoxide dismutase activity"/>
    <property type="evidence" value="ECO:0007669"/>
    <property type="project" value="UniProtKB-EC"/>
</dbReference>
<dbReference type="CDD" id="cd00305">
    <property type="entry name" value="Cu-Zn_Superoxide_Dismutase"/>
    <property type="match status" value="1"/>
</dbReference>
<dbReference type="Gene3D" id="2.60.40.200">
    <property type="entry name" value="Superoxide dismutase, copper/zinc binding domain"/>
    <property type="match status" value="1"/>
</dbReference>
<dbReference type="InterPro" id="IPR036423">
    <property type="entry name" value="SOD-like_Cu/Zn_dom_sf"/>
</dbReference>
<dbReference type="InterPro" id="IPR024134">
    <property type="entry name" value="SOD_Cu/Zn_/chaperone"/>
</dbReference>
<dbReference type="InterPro" id="IPR018152">
    <property type="entry name" value="SOD_Cu/Zn_BS"/>
</dbReference>
<dbReference type="InterPro" id="IPR001424">
    <property type="entry name" value="SOD_Cu_Zn_dom"/>
</dbReference>
<dbReference type="NCBIfam" id="NF007628">
    <property type="entry name" value="PRK10290.1"/>
    <property type="match status" value="1"/>
</dbReference>
<dbReference type="PANTHER" id="PTHR10003">
    <property type="entry name" value="SUPEROXIDE DISMUTASE CU-ZN -RELATED"/>
    <property type="match status" value="1"/>
</dbReference>
<dbReference type="Pfam" id="PF00080">
    <property type="entry name" value="Sod_Cu"/>
    <property type="match status" value="1"/>
</dbReference>
<dbReference type="SUPFAM" id="SSF49329">
    <property type="entry name" value="Cu,Zn superoxide dismutase-like"/>
    <property type="match status" value="1"/>
</dbReference>
<dbReference type="PROSITE" id="PS00087">
    <property type="entry name" value="SOD_CU_ZN_1"/>
    <property type="match status" value="1"/>
</dbReference>
<dbReference type="PROSITE" id="PS00332">
    <property type="entry name" value="SOD_CU_ZN_2"/>
    <property type="match status" value="1"/>
</dbReference>
<protein>
    <recommendedName>
        <fullName>Superoxide dismutase [Cu-Zn]</fullName>
        <ecNumber>1.15.1.1</ecNumber>
    </recommendedName>
</protein>
<sequence length="174" mass="18262">MMKSLFIASTMVLMAFPAFAESTTVKMYEALPTGPGKEVGTVVISEAPGGLHFKVNMEKLTPGYHGFHVHENPSCAPGEKDGKIVPALAAGGHYDPGNTHHHLGPEGDGHMGDLPRLSANADGKVSETVVAPHLKKLAEIKQRSLMVHVGGDNYSDKPEPLGGGGARFACGVIE</sequence>
<feature type="signal peptide" evidence="2">
    <location>
        <begin position="1"/>
        <end position="20"/>
    </location>
</feature>
<feature type="chain" id="PRO_0000032822" description="Superoxide dismutase [Cu-Zn]">
    <location>
        <begin position="21"/>
        <end position="174"/>
    </location>
</feature>
<feature type="binding site" evidence="1">
    <location>
        <position position="68"/>
    </location>
    <ligand>
        <name>Cu cation</name>
        <dbReference type="ChEBI" id="CHEBI:23378"/>
        <note>catalytic</note>
    </ligand>
</feature>
<feature type="binding site" evidence="1">
    <location>
        <position position="70"/>
    </location>
    <ligand>
        <name>Cu cation</name>
        <dbReference type="ChEBI" id="CHEBI:23378"/>
        <note>catalytic</note>
    </ligand>
</feature>
<feature type="binding site" evidence="1">
    <location>
        <position position="93"/>
    </location>
    <ligand>
        <name>Cu cation</name>
        <dbReference type="ChEBI" id="CHEBI:23378"/>
        <note>catalytic</note>
    </ligand>
</feature>
<feature type="binding site" evidence="1">
    <location>
        <position position="93"/>
    </location>
    <ligand>
        <name>Zn(2+)</name>
        <dbReference type="ChEBI" id="CHEBI:29105"/>
        <note>structural</note>
    </ligand>
</feature>
<feature type="binding site" evidence="1">
    <location>
        <position position="102"/>
    </location>
    <ligand>
        <name>Zn(2+)</name>
        <dbReference type="ChEBI" id="CHEBI:29105"/>
        <note>structural</note>
    </ligand>
</feature>
<feature type="binding site" evidence="1">
    <location>
        <position position="110"/>
    </location>
    <ligand>
        <name>Zn(2+)</name>
        <dbReference type="ChEBI" id="CHEBI:29105"/>
        <note>structural</note>
    </ligand>
</feature>
<feature type="binding site" evidence="1">
    <location>
        <position position="113"/>
    </location>
    <ligand>
        <name>Zn(2+)</name>
        <dbReference type="ChEBI" id="CHEBI:29105"/>
        <note>structural</note>
    </ligand>
</feature>
<feature type="binding site" evidence="1">
    <location>
        <position position="148"/>
    </location>
    <ligand>
        <name>Cu cation</name>
        <dbReference type="ChEBI" id="CHEBI:23378"/>
        <note>catalytic</note>
    </ligand>
</feature>
<feature type="disulfide bond" evidence="1">
    <location>
        <begin position="75"/>
        <end position="170"/>
    </location>
</feature>
<accession>P66827</accession>
<accession>G0KD75</accession>
<accession>P58645</accession>
<comment type="function">
    <text evidence="1">Destroys radicals which are normally produced within the cells and which are toxic to biological systems.</text>
</comment>
<comment type="catalytic activity">
    <reaction>
        <text>2 superoxide + 2 H(+) = H2O2 + O2</text>
        <dbReference type="Rhea" id="RHEA:20696"/>
        <dbReference type="ChEBI" id="CHEBI:15378"/>
        <dbReference type="ChEBI" id="CHEBI:15379"/>
        <dbReference type="ChEBI" id="CHEBI:16240"/>
        <dbReference type="ChEBI" id="CHEBI:18421"/>
        <dbReference type="EC" id="1.15.1.1"/>
    </reaction>
</comment>
<comment type="cofactor">
    <cofactor evidence="1">
        <name>Cu cation</name>
        <dbReference type="ChEBI" id="CHEBI:23378"/>
    </cofactor>
    <text evidence="1">Binds 1 copper ion per subunit.</text>
</comment>
<comment type="cofactor">
    <cofactor evidence="1">
        <name>Zn(2+)</name>
        <dbReference type="ChEBI" id="CHEBI:29105"/>
    </cofactor>
    <text evidence="1">Binds 1 zinc ion per subunit.</text>
</comment>
<comment type="subunit">
    <text evidence="1">Homodimer.</text>
</comment>
<comment type="subcellular location">
    <subcellularLocation>
        <location evidence="1">Periplasm</location>
    </subcellularLocation>
</comment>
<comment type="similarity">
    <text evidence="3">Belongs to the Cu-Zn superoxide dismutase family.</text>
</comment>
<comment type="sequence caution" evidence="3">
    <conflict type="erroneous initiation">
        <sequence resource="EMBL-CDS" id="AAN33888"/>
    </conflict>
</comment>
<comment type="sequence caution" evidence="3">
    <conflict type="erroneous initiation">
        <sequence resource="EMBL-CDS" id="AEM20163"/>
    </conflict>
    <text>Truncated N-terminus.</text>
</comment>
<organism>
    <name type="scientific">Brucella suis biovar 1 (strain 1330)</name>
    <dbReference type="NCBI Taxonomy" id="204722"/>
    <lineage>
        <taxon>Bacteria</taxon>
        <taxon>Pseudomonadati</taxon>
        <taxon>Pseudomonadota</taxon>
        <taxon>Alphaproteobacteria</taxon>
        <taxon>Hyphomicrobiales</taxon>
        <taxon>Brucellaceae</taxon>
        <taxon>Brucella/Ochrobactrum group</taxon>
        <taxon>Brucella</taxon>
    </lineage>
</organism>